<sequence>MRGSAAAAAATVTRVAQRVVAPSAATPGGALPLSWLDRYPTQRALIESLHVFKGRADAAVAPAAAIERALAAALVSYYPIAGRLAERGDGGELVVDCTGEGVWFIEATASCSLEDVDYLEYPLMVDKDELLPHPTYPASESHPEDSLILLVQVTQFACGGFVVGFRFSHAAAPRPDGAPPPVPRHGHLHRLHRPLQGEVPGADGPPVQRVRGAHRQGVAVADARGGVRPGVPRPRVLRHERAPRAPARAPGRLLRQLLLHHAGDGGGGGGGGRVGERRGEADPGGEEAAPGGVRAVERRRRRRRGRPVPDHLRLPDAAGLRLVAAGVRRGGLRVGRPRPRRAAHQPRLHRHLHPRPPLRPQARRPPHHPVRRRRRRRRLPQRHDAPRLITERAHRPPPPTSPAQFDSFFFSFFFWVFSLLSLYARHGIHSP</sequence>
<reference key="1">
    <citation type="journal article" date="2005" name="Nature">
        <title>The map-based sequence of the rice genome.</title>
        <authorList>
            <consortium name="International rice genome sequencing project (IRGSP)"/>
        </authorList>
    </citation>
    <scope>NUCLEOTIDE SEQUENCE [LARGE SCALE GENOMIC DNA]</scope>
    <source>
        <strain>cv. Nipponbare</strain>
    </source>
</reference>
<reference key="2">
    <citation type="journal article" date="2008" name="Nucleic Acids Res.">
        <title>The rice annotation project database (RAP-DB): 2008 update.</title>
        <authorList>
            <consortium name="The rice annotation project (RAP)"/>
        </authorList>
    </citation>
    <scope>GENOME REANNOTATION</scope>
    <source>
        <strain>cv. Nipponbare</strain>
    </source>
</reference>
<reference key="3">
    <citation type="journal article" date="2013" name="Rice">
        <title>Improvement of the Oryza sativa Nipponbare reference genome using next generation sequence and optical map data.</title>
        <authorList>
            <person name="Kawahara Y."/>
            <person name="de la Bastide M."/>
            <person name="Hamilton J.P."/>
            <person name="Kanamori H."/>
            <person name="McCombie W.R."/>
            <person name="Ouyang S."/>
            <person name="Schwartz D.C."/>
            <person name="Tanaka T."/>
            <person name="Wu J."/>
            <person name="Zhou S."/>
            <person name="Childs K.L."/>
            <person name="Davidson R.M."/>
            <person name="Lin H."/>
            <person name="Quesada-Ocampo L."/>
            <person name="Vaillancourt B."/>
            <person name="Sakai H."/>
            <person name="Lee S.S."/>
            <person name="Kim J."/>
            <person name="Numa H."/>
            <person name="Itoh T."/>
            <person name="Buell C.R."/>
            <person name="Matsumoto T."/>
        </authorList>
    </citation>
    <scope>GENOME REANNOTATION</scope>
    <source>
        <strain>cv. Nipponbare</strain>
    </source>
</reference>
<reference key="4">
    <citation type="journal article" date="2010" name="Planta">
        <title>Down-regulation of four putative arabinoxylan feruloyl transferase genes from family PF02458 reduces ester-linked ferulate content in rice cell walls.</title>
        <authorList>
            <person name="Piston F."/>
            <person name="Uauy C."/>
            <person name="Fu L."/>
            <person name="Langston J."/>
            <person name="Labavitch J."/>
            <person name="Dubcovsky J."/>
        </authorList>
    </citation>
    <scope>FUNCTION</scope>
</reference>
<reference key="5">
    <citation type="journal article" date="2013" name="Plant Physiol.">
        <title>Overexpression of a BAHD acyltransferase, OsAt10, alters rice cell wall hydroxycinnamic acid content and saccharification.</title>
        <authorList>
            <person name="Bartley L.E."/>
            <person name="Peck M.L."/>
            <person name="Kim S.R."/>
            <person name="Ebert B."/>
            <person name="Manisseri C."/>
            <person name="Chiniquy D.M."/>
            <person name="Sykes R."/>
            <person name="Gao L."/>
            <person name="Rautengarten C."/>
            <person name="Vega-Sanchez M.E."/>
            <person name="Benke P.I."/>
            <person name="Canlas P.E."/>
            <person name="Cao P."/>
            <person name="Brewer S."/>
            <person name="Lin F."/>
            <person name="Smith W.L."/>
            <person name="Zhang X."/>
            <person name="Keasling J.D."/>
            <person name="Jentoff R.E."/>
            <person name="Foster S.B."/>
            <person name="Zhou J."/>
            <person name="Ziebell A."/>
            <person name="An G."/>
            <person name="Scheller H.V."/>
            <person name="Ronald P.C."/>
        </authorList>
    </citation>
    <scope>GENE FAMILY</scope>
    <scope>NOMENCLATURE</scope>
</reference>
<gene>
    <name evidence="4" type="primary">AT8</name>
    <name evidence="8" type="ordered locus">Os06g0595800</name>
    <name evidence="5" type="ordered locus">LOC_Os06g39470</name>
    <name evidence="6" type="ORF">P0417D05.2</name>
    <name evidence="7" type="ORF">P0652A05.34</name>
</gene>
<organism>
    <name type="scientific">Oryza sativa subsp. japonica</name>
    <name type="common">Rice</name>
    <dbReference type="NCBI Taxonomy" id="39947"/>
    <lineage>
        <taxon>Eukaryota</taxon>
        <taxon>Viridiplantae</taxon>
        <taxon>Streptophyta</taxon>
        <taxon>Embryophyta</taxon>
        <taxon>Tracheophyta</taxon>
        <taxon>Spermatophyta</taxon>
        <taxon>Magnoliopsida</taxon>
        <taxon>Liliopsida</taxon>
        <taxon>Poales</taxon>
        <taxon>Poaceae</taxon>
        <taxon>BOP clade</taxon>
        <taxon>Oryzoideae</taxon>
        <taxon>Oryzeae</taxon>
        <taxon>Oryzinae</taxon>
        <taxon>Oryza</taxon>
        <taxon>Oryza sativa</taxon>
    </lineage>
</organism>
<comment type="function">
    <text evidence="3">Involved in the incorporation of ferulate into the cell wall. May act as arabinoxylan feruloyl transferase.</text>
</comment>
<comment type="similarity">
    <text evidence="5">Belongs to the plant acyltransferase family.</text>
</comment>
<feature type="chain" id="PRO_0000437778" description="Acyl transferase 8">
    <location>
        <begin position="1"/>
        <end position="431"/>
    </location>
</feature>
<feature type="region of interest" description="Disordered" evidence="2">
    <location>
        <begin position="220"/>
        <end position="247"/>
    </location>
</feature>
<feature type="region of interest" description="Disordered" evidence="2">
    <location>
        <begin position="260"/>
        <end position="313"/>
    </location>
</feature>
<feature type="region of interest" description="Disordered" evidence="2">
    <location>
        <begin position="331"/>
        <end position="400"/>
    </location>
</feature>
<feature type="compositionally biased region" description="Low complexity" evidence="2">
    <location>
        <begin position="224"/>
        <end position="234"/>
    </location>
</feature>
<feature type="compositionally biased region" description="Gly residues" evidence="2">
    <location>
        <begin position="264"/>
        <end position="273"/>
    </location>
</feature>
<feature type="compositionally biased region" description="Basic residues" evidence="2">
    <location>
        <begin position="297"/>
        <end position="306"/>
    </location>
</feature>
<feature type="compositionally biased region" description="Basic residues" evidence="2">
    <location>
        <begin position="335"/>
        <end position="380"/>
    </location>
</feature>
<feature type="compositionally biased region" description="Basic and acidic residues" evidence="2">
    <location>
        <begin position="381"/>
        <end position="394"/>
    </location>
</feature>
<feature type="active site" description="Proton acceptor" evidence="1">
    <location>
        <position position="169"/>
    </location>
</feature>
<evidence type="ECO:0000250" key="1">
    <source>
        <dbReference type="UniProtKB" id="Q8W1W9"/>
    </source>
</evidence>
<evidence type="ECO:0000256" key="2">
    <source>
        <dbReference type="SAM" id="MobiDB-lite"/>
    </source>
</evidence>
<evidence type="ECO:0000269" key="3">
    <source>
    </source>
</evidence>
<evidence type="ECO:0000303" key="4">
    <source>
    </source>
</evidence>
<evidence type="ECO:0000305" key="5"/>
<evidence type="ECO:0000312" key="6">
    <source>
        <dbReference type="EMBL" id="BAD33029.1"/>
    </source>
</evidence>
<evidence type="ECO:0000312" key="7">
    <source>
        <dbReference type="EMBL" id="BAD33132.1"/>
    </source>
</evidence>
<evidence type="ECO:0000312" key="8">
    <source>
        <dbReference type="EMBL" id="BAF19897.1"/>
    </source>
</evidence>
<keyword id="KW-0012">Acyltransferase</keyword>
<keyword id="KW-1185">Reference proteome</keyword>
<keyword id="KW-0808">Transferase</keyword>
<proteinExistence type="inferred from homology"/>
<dbReference type="EC" id="2.3.1.-" evidence="5"/>
<dbReference type="EMBL" id="AP004236">
    <property type="protein sequence ID" value="BAD33029.1"/>
    <property type="molecule type" value="Genomic_DNA"/>
</dbReference>
<dbReference type="EMBL" id="AP004571">
    <property type="protein sequence ID" value="BAD33132.1"/>
    <property type="molecule type" value="Genomic_DNA"/>
</dbReference>
<dbReference type="EMBL" id="AP008212">
    <property type="protein sequence ID" value="BAF19897.1"/>
    <property type="molecule type" value="Genomic_DNA"/>
</dbReference>
<dbReference type="EMBL" id="AP014962">
    <property type="protein sequence ID" value="BAS98459.1"/>
    <property type="molecule type" value="Genomic_DNA"/>
</dbReference>
<dbReference type="SMR" id="Q69UD7"/>
<dbReference type="STRING" id="39947.Q69UD7"/>
<dbReference type="PaxDb" id="39947-Q69UD7"/>
<dbReference type="EnsemblPlants" id="Os06t0595800-01">
    <property type="protein sequence ID" value="Os06t0595800-01"/>
    <property type="gene ID" value="Os06g0595800"/>
</dbReference>
<dbReference type="Gramene" id="Os06t0595800-01">
    <property type="protein sequence ID" value="Os06t0595800-01"/>
    <property type="gene ID" value="Os06g0595800"/>
</dbReference>
<dbReference type="KEGG" id="dosa:Os06g0595800"/>
<dbReference type="eggNOG" id="ENOG502SK9M">
    <property type="taxonomic scope" value="Eukaryota"/>
</dbReference>
<dbReference type="HOGENOM" id="CLU_636777_0_0_1"/>
<dbReference type="InParanoid" id="Q69UD7"/>
<dbReference type="Proteomes" id="UP000000763">
    <property type="component" value="Chromosome 6"/>
</dbReference>
<dbReference type="Proteomes" id="UP000059680">
    <property type="component" value="Chromosome 6"/>
</dbReference>
<dbReference type="GO" id="GO:0050734">
    <property type="term" value="F:hydroxycinnamoyltransferase activity"/>
    <property type="evidence" value="ECO:0007669"/>
    <property type="project" value="UniProtKB-ARBA"/>
</dbReference>
<dbReference type="Gene3D" id="3.30.559.10">
    <property type="entry name" value="Chloramphenicol acetyltransferase-like domain"/>
    <property type="match status" value="1"/>
</dbReference>
<dbReference type="InterPro" id="IPR023213">
    <property type="entry name" value="CAT-like_dom_sf"/>
</dbReference>
<dbReference type="InterPro" id="IPR050898">
    <property type="entry name" value="Plant_acyltransferase"/>
</dbReference>
<dbReference type="PANTHER" id="PTHR31147">
    <property type="entry name" value="ACYL TRANSFERASE 4"/>
    <property type="match status" value="1"/>
</dbReference>
<dbReference type="PANTHER" id="PTHR31147:SF12">
    <property type="entry name" value="ACYL TRANSFERASE 8"/>
    <property type="match status" value="1"/>
</dbReference>
<dbReference type="Pfam" id="PF02458">
    <property type="entry name" value="Transferase"/>
    <property type="match status" value="1"/>
</dbReference>
<name>AT8_ORYSJ</name>
<protein>
    <recommendedName>
        <fullName evidence="5">Acyl transferase 8</fullName>
        <shortName evidence="4">OsAT8</shortName>
        <ecNumber evidence="5">2.3.1.-</ecNumber>
    </recommendedName>
</protein>
<accession>Q69UD7</accession>